<dbReference type="EMBL" id="AY100691">
    <property type="protein sequence ID" value="AAM49809.1"/>
    <property type="molecule type" value="mRNA"/>
</dbReference>
<dbReference type="EMBL" id="AL353995">
    <property type="protein sequence ID" value="CAB89396.1"/>
    <property type="molecule type" value="Genomic_DNA"/>
</dbReference>
<dbReference type="EMBL" id="CP002688">
    <property type="protein sequence ID" value="AED91546.1"/>
    <property type="molecule type" value="Genomic_DNA"/>
</dbReference>
<dbReference type="EMBL" id="CP002688">
    <property type="protein sequence ID" value="AED91547.1"/>
    <property type="molecule type" value="Genomic_DNA"/>
</dbReference>
<dbReference type="EMBL" id="AK226701">
    <property type="protein sequence ID" value="BAE98808.1"/>
    <property type="status" value="ALT_SEQ"/>
    <property type="molecule type" value="mRNA"/>
</dbReference>
<dbReference type="EMBL" id="AJ001729">
    <property type="protein sequence ID" value="CAA04956.1"/>
    <property type="molecule type" value="mRNA"/>
</dbReference>
<dbReference type="PIR" id="T49992">
    <property type="entry name" value="T49992"/>
</dbReference>
<dbReference type="RefSeq" id="NP_001078565.1">
    <molecule id="Q9LX99-2"/>
    <property type="nucleotide sequence ID" value="NM_001085096.1"/>
</dbReference>
<dbReference type="RefSeq" id="NP_196609.1">
    <molecule id="Q9LX99-1"/>
    <property type="nucleotide sequence ID" value="NM_121085.3"/>
</dbReference>
<dbReference type="SMR" id="Q9LX99"/>
<dbReference type="BioGRID" id="16189">
    <property type="interactions" value="3"/>
</dbReference>
<dbReference type="DIP" id="DIP-46998N"/>
<dbReference type="FunCoup" id="Q9LX99">
    <property type="interactions" value="1191"/>
</dbReference>
<dbReference type="IntAct" id="Q9LX99">
    <property type="interactions" value="3"/>
</dbReference>
<dbReference type="STRING" id="3702.Q9LX99"/>
<dbReference type="iPTMnet" id="Q9LX99"/>
<dbReference type="PaxDb" id="3702-AT5G10470.2"/>
<dbReference type="ProteomicsDB" id="238402">
    <molecule id="Q9LX99-1"/>
</dbReference>
<dbReference type="EnsemblPlants" id="AT5G10470.1">
    <molecule id="Q9LX99-1"/>
    <property type="protein sequence ID" value="AT5G10470.1"/>
    <property type="gene ID" value="AT5G10470"/>
</dbReference>
<dbReference type="EnsemblPlants" id="AT5G10470.2">
    <molecule id="Q9LX99-2"/>
    <property type="protein sequence ID" value="AT5G10470.2"/>
    <property type="gene ID" value="AT5G10470"/>
</dbReference>
<dbReference type="GeneID" id="830911"/>
<dbReference type="Gramene" id="AT5G10470.1">
    <molecule id="Q9LX99-1"/>
    <property type="protein sequence ID" value="AT5G10470.1"/>
    <property type="gene ID" value="AT5G10470"/>
</dbReference>
<dbReference type="Gramene" id="AT5G10470.2">
    <molecule id="Q9LX99-2"/>
    <property type="protein sequence ID" value="AT5G10470.2"/>
    <property type="gene ID" value="AT5G10470"/>
</dbReference>
<dbReference type="KEGG" id="ath:AT5G10470"/>
<dbReference type="Araport" id="AT5G10470"/>
<dbReference type="TAIR" id="AT5G10470">
    <property type="gene designation" value="KAC1"/>
</dbReference>
<dbReference type="eggNOG" id="KOG0239">
    <property type="taxonomic scope" value="Eukaryota"/>
</dbReference>
<dbReference type="HOGENOM" id="CLU_008815_0_0_1"/>
<dbReference type="InParanoid" id="Q9LX99"/>
<dbReference type="OMA" id="ITACELY"/>
<dbReference type="PhylomeDB" id="Q9LX99"/>
<dbReference type="CD-CODE" id="33FCD62D">
    <property type="entry name" value="Centrosome"/>
</dbReference>
<dbReference type="PRO" id="PR:Q9LX99"/>
<dbReference type="Proteomes" id="UP000006548">
    <property type="component" value="Chromosome 5"/>
</dbReference>
<dbReference type="ExpressionAtlas" id="Q9LX99">
    <property type="expression patterns" value="baseline and differential"/>
</dbReference>
<dbReference type="GO" id="GO:0009504">
    <property type="term" value="C:cell plate"/>
    <property type="evidence" value="ECO:0000314"/>
    <property type="project" value="TAIR"/>
</dbReference>
<dbReference type="GO" id="GO:0009941">
    <property type="term" value="C:chloroplast envelope"/>
    <property type="evidence" value="ECO:0007005"/>
    <property type="project" value="TAIR"/>
</dbReference>
<dbReference type="GO" id="GO:0005694">
    <property type="term" value="C:chromosome"/>
    <property type="evidence" value="ECO:0007669"/>
    <property type="project" value="UniProtKB-SubCell"/>
</dbReference>
<dbReference type="GO" id="GO:0005829">
    <property type="term" value="C:cytosol"/>
    <property type="evidence" value="ECO:0000314"/>
    <property type="project" value="TAIR"/>
</dbReference>
<dbReference type="GO" id="GO:0005874">
    <property type="term" value="C:microtubule"/>
    <property type="evidence" value="ECO:0007669"/>
    <property type="project" value="UniProtKB-KW"/>
</dbReference>
<dbReference type="GO" id="GO:0005634">
    <property type="term" value="C:nucleus"/>
    <property type="evidence" value="ECO:0007669"/>
    <property type="project" value="UniProtKB-SubCell"/>
</dbReference>
<dbReference type="GO" id="GO:0009524">
    <property type="term" value="C:phragmoplast"/>
    <property type="evidence" value="ECO:0000314"/>
    <property type="project" value="TAIR"/>
</dbReference>
<dbReference type="GO" id="GO:0005886">
    <property type="term" value="C:plasma membrane"/>
    <property type="evidence" value="ECO:0000314"/>
    <property type="project" value="TAIR"/>
</dbReference>
<dbReference type="GO" id="GO:0005819">
    <property type="term" value="C:spindle"/>
    <property type="evidence" value="ECO:0007669"/>
    <property type="project" value="UniProtKB-SubCell"/>
</dbReference>
<dbReference type="GO" id="GO:0005524">
    <property type="term" value="F:ATP binding"/>
    <property type="evidence" value="ECO:0007669"/>
    <property type="project" value="UniProtKB-KW"/>
</dbReference>
<dbReference type="GO" id="GO:0008017">
    <property type="term" value="F:microtubule binding"/>
    <property type="evidence" value="ECO:0000314"/>
    <property type="project" value="TAIR"/>
</dbReference>
<dbReference type="GO" id="GO:0003777">
    <property type="term" value="F:microtubule motor activity"/>
    <property type="evidence" value="ECO:0007669"/>
    <property type="project" value="InterPro"/>
</dbReference>
<dbReference type="GO" id="GO:0009904">
    <property type="term" value="P:chloroplast accumulation movement"/>
    <property type="evidence" value="ECO:0000316"/>
    <property type="project" value="UniProtKB"/>
</dbReference>
<dbReference type="GO" id="GO:0009903">
    <property type="term" value="P:chloroplast avoidance movement"/>
    <property type="evidence" value="ECO:0000316"/>
    <property type="project" value="UniProtKB"/>
</dbReference>
<dbReference type="GO" id="GO:0000911">
    <property type="term" value="P:cytokinesis by cell plate formation"/>
    <property type="evidence" value="ECO:0000304"/>
    <property type="project" value="TAIR"/>
</dbReference>
<dbReference type="GO" id="GO:0007018">
    <property type="term" value="P:microtubule-based movement"/>
    <property type="evidence" value="ECO:0007669"/>
    <property type="project" value="InterPro"/>
</dbReference>
<dbReference type="GO" id="GO:0031022">
    <property type="term" value="P:nuclear migration along microfilament"/>
    <property type="evidence" value="ECO:0000316"/>
    <property type="project" value="UniProtKB"/>
</dbReference>
<dbReference type="GO" id="GO:0000913">
    <property type="term" value="P:preprophase band assembly"/>
    <property type="evidence" value="ECO:0000304"/>
    <property type="project" value="TAIR"/>
</dbReference>
<dbReference type="FunFam" id="3.40.850.10:FF:000058">
    <property type="entry name" value="kinesin-like protein KIN-14B isoform X1"/>
    <property type="match status" value="1"/>
</dbReference>
<dbReference type="Gene3D" id="3.40.850.10">
    <property type="entry name" value="Kinesin motor domain"/>
    <property type="match status" value="1"/>
</dbReference>
<dbReference type="InterPro" id="IPR027640">
    <property type="entry name" value="Kinesin-like_fam"/>
</dbReference>
<dbReference type="InterPro" id="IPR019821">
    <property type="entry name" value="Kinesin_motor_CS"/>
</dbReference>
<dbReference type="InterPro" id="IPR001752">
    <property type="entry name" value="Kinesin_motor_dom"/>
</dbReference>
<dbReference type="InterPro" id="IPR036961">
    <property type="entry name" value="Kinesin_motor_dom_sf"/>
</dbReference>
<dbReference type="InterPro" id="IPR027417">
    <property type="entry name" value="P-loop_NTPase"/>
</dbReference>
<dbReference type="PANTHER" id="PTHR47972:SF22">
    <property type="entry name" value="KINESIN-LIKE PROTEIN KIN-14A-RELATED"/>
    <property type="match status" value="1"/>
</dbReference>
<dbReference type="PANTHER" id="PTHR47972">
    <property type="entry name" value="KINESIN-LIKE PROTEIN KLP-3"/>
    <property type="match status" value="1"/>
</dbReference>
<dbReference type="Pfam" id="PF00225">
    <property type="entry name" value="Kinesin"/>
    <property type="match status" value="1"/>
</dbReference>
<dbReference type="PRINTS" id="PR00380">
    <property type="entry name" value="KINESINHEAVY"/>
</dbReference>
<dbReference type="SMART" id="SM00129">
    <property type="entry name" value="KISc"/>
    <property type="match status" value="1"/>
</dbReference>
<dbReference type="SUPFAM" id="SSF52540">
    <property type="entry name" value="P-loop containing nucleoside triphosphate hydrolases"/>
    <property type="match status" value="1"/>
</dbReference>
<dbReference type="PROSITE" id="PS00411">
    <property type="entry name" value="KINESIN_MOTOR_1"/>
    <property type="match status" value="1"/>
</dbReference>
<dbReference type="PROSITE" id="PS50067">
    <property type="entry name" value="KINESIN_MOTOR_2"/>
    <property type="match status" value="1"/>
</dbReference>
<protein>
    <recommendedName>
        <fullName evidence="17">Kinesin-like protein KIN-14A</fullName>
    </recommendedName>
    <alternativeName>
        <fullName evidence="11">Geminivirus Rep-interacting motor protein</fullName>
    </alternativeName>
    <alternativeName>
        <fullName evidence="19">Geminivirus replication protein-interacting protein</fullName>
    </alternativeName>
    <alternativeName>
        <fullName evidence="13">Kinesin CDKA-1-associated protein 1</fullName>
    </alternativeName>
    <alternativeName>
        <fullName evidence="13">Kinesin-like protein KCA1</fullName>
    </alternativeName>
    <alternativeName>
        <fullName evidence="15">Kinesin-like protein for actin-based chloroplast movement 1</fullName>
    </alternativeName>
</protein>
<comment type="function">
    <text evidence="6 7 8 9">Kinesin-like protein required for chloroplast movements and anchor to the plasma membrane. Mediates chloroplast movement via chloroplast actin (cp-actin) filaments. Required for the chloroplast avoidance response under high intensity blue light (PubMed:20418504, PubMed:27310016). Mediates redundantly with CHUP1 the nuclear avoidance response under high intensity blue light (PubMed:27310016). May act as a mitotic kinesin (PubMed:15247388). Probably involved in division plane determination (PubMed:16461285).</text>
</comment>
<comment type="subunit">
    <text evidence="4 5 6 10">Homodimer and heterodimer with KCA2 (PubMed:15247388). Interacts with CDKA-1 (PubMed:15247388, Ref.5). Interacts with AL1, a geminivirus (TGMV) protein essential for viral replication (PubMed:12172024). Interacts with LUE1/KSS (PubMed:12571277).</text>
</comment>
<comment type="interaction">
    <interactant intactId="EBI-2025621">
        <id>Q9LX99</id>
    </interactant>
    <interactant intactId="EBI-2025583">
        <id>Q9SEX2</id>
        <label>AAA1</label>
    </interactant>
    <organismsDiffer>false</organismsDiffer>
    <experiments>3</experiments>
</comment>
<comment type="subcellular location">
    <subcellularLocation>
        <location>Nucleus</location>
    </subcellularLocation>
    <subcellularLocation>
        <location>Cytoplasm</location>
        <location>Cytoskeleton</location>
        <location>Spindle</location>
    </subcellularLocation>
    <subcellularLocation>
        <location>Chromosome</location>
    </subcellularLocation>
    <subcellularLocation>
        <location>Cell membrane</location>
    </subcellularLocation>
    <subcellularLocation>
        <location>Cytoplasm</location>
        <location>Cytoskeleton</location>
        <location>Phragmoplast</location>
    </subcellularLocation>
    <text>Localizes to the spindle apparatus and condensed chromosomes in mitotic cells. Localizes in the forming cell plate and the cortical division zone (CDZ) during cytokinesis.</text>
</comment>
<comment type="alternative products">
    <event type="alternative splicing"/>
    <isoform>
        <id>Q9LX99-1</id>
        <name>1</name>
        <sequence type="displayed"/>
    </isoform>
    <isoform>
        <id>Q9LX99-2</id>
        <name>2</name>
        <sequence type="described" ref="VSP_041595"/>
    </isoform>
</comment>
<comment type="tissue specificity">
    <text evidence="4">Widely expressed.</text>
</comment>
<comment type="developmental stage">
    <text evidence="4">Not developmentally regulated.</text>
</comment>
<comment type="PTM">
    <text evidence="4">Part of the phosphorylation is not CDK-dependent.</text>
</comment>
<comment type="disruption phenotype">
    <text evidence="8 9">Impaired chloroplast accumulation and slow avoidance movement under strong blue light (PubMed:20418504). Double mutant kac1kac2 exhibits an increase in leaf transmittance and a partial defect in nuclear avoidance response under strong blue light exposure (PubMed:27310016).</text>
</comment>
<comment type="similarity">
    <text evidence="14">Belongs to the TRAFAC class myosin-kinesin ATPase superfamily. Kinesin family. KIN-14 subfamily.</text>
</comment>
<comment type="sequence caution" evidence="17">
    <conflict type="miscellaneous discrepancy">
        <sequence resource="EMBL-CDS" id="BAE98808"/>
    </conflict>
    <text>Contaminating sequence.</text>
</comment>
<feature type="chain" id="PRO_0000311998" description="Kinesin-like protein KIN-14A">
    <location>
        <begin position="1"/>
        <end position="1273"/>
    </location>
</feature>
<feature type="domain" description="Kinesin motor" evidence="2">
    <location>
        <begin position="142"/>
        <end position="456"/>
    </location>
</feature>
<feature type="region of interest" description="Disordered" evidence="3">
    <location>
        <begin position="1"/>
        <end position="52"/>
    </location>
</feature>
<feature type="region of interest" description="Disordered" evidence="3">
    <location>
        <begin position="827"/>
        <end position="847"/>
    </location>
</feature>
<feature type="region of interest" description="Disordered" evidence="3">
    <location>
        <begin position="1136"/>
        <end position="1157"/>
    </location>
</feature>
<feature type="coiled-coil region" evidence="1">
    <location>
        <begin position="59"/>
        <end position="89"/>
    </location>
</feature>
<feature type="coiled-coil region" evidence="1">
    <location>
        <begin position="466"/>
        <end position="511"/>
    </location>
</feature>
<feature type="coiled-coil region" evidence="1">
    <location>
        <begin position="559"/>
        <end position="595"/>
    </location>
</feature>
<feature type="coiled-coil region" evidence="1">
    <location>
        <begin position="627"/>
        <end position="657"/>
    </location>
</feature>
<feature type="compositionally biased region" description="Low complexity" evidence="3">
    <location>
        <begin position="830"/>
        <end position="846"/>
    </location>
</feature>
<feature type="binding site" evidence="2">
    <location>
        <begin position="223"/>
        <end position="230"/>
    </location>
    <ligand>
        <name>ATP</name>
        <dbReference type="ChEBI" id="CHEBI:30616"/>
    </ligand>
</feature>
<feature type="splice variant" id="VSP_041595" description="In isoform 2." evidence="17">
    <original>N</original>
    <variation>NS</variation>
    <location>
        <position position="683"/>
    </location>
</feature>
<feature type="mutagenesis site" description="Decreases protein stability." evidence="8">
    <original>N</original>
    <variation>K</variation>
    <location>
        <position position="134"/>
    </location>
</feature>
<feature type="mutagenesis site" description="Decreases protein stability." evidence="8">
    <original>K</original>
    <variation>N</variation>
    <location>
        <position position="426"/>
    </location>
</feature>
<feature type="mutagenesis site" description="No effect on cellular localization; when associated with A-845." evidence="7">
    <original>S</original>
    <variation>A</variation>
    <location>
        <position position="841"/>
    </location>
</feature>
<feature type="mutagenesis site" description="Loss of cell plate and plasma membrane targeting; when associated with E-845." evidence="7">
    <original>S</original>
    <variation>E</variation>
    <location>
        <position position="841"/>
    </location>
</feature>
<feature type="mutagenesis site" description="No effect on cellular localization; when associated with A-841." evidence="7">
    <original>S</original>
    <variation>A</variation>
    <location>
        <position position="845"/>
    </location>
</feature>
<feature type="mutagenesis site" description="Loss of cell plate and plasma membrane targeting; when associated with E-841." evidence="7">
    <original>S</original>
    <variation>E</variation>
    <location>
        <position position="845"/>
    </location>
</feature>
<organism>
    <name type="scientific">Arabidopsis thaliana</name>
    <name type="common">Mouse-ear cress</name>
    <dbReference type="NCBI Taxonomy" id="3702"/>
    <lineage>
        <taxon>Eukaryota</taxon>
        <taxon>Viridiplantae</taxon>
        <taxon>Streptophyta</taxon>
        <taxon>Embryophyta</taxon>
        <taxon>Tracheophyta</taxon>
        <taxon>Spermatophyta</taxon>
        <taxon>Magnoliopsida</taxon>
        <taxon>eudicotyledons</taxon>
        <taxon>Gunneridae</taxon>
        <taxon>Pentapetalae</taxon>
        <taxon>rosids</taxon>
        <taxon>malvids</taxon>
        <taxon>Brassicales</taxon>
        <taxon>Brassicaceae</taxon>
        <taxon>Camelineae</taxon>
        <taxon>Arabidopsis</taxon>
    </lineage>
</organism>
<proteinExistence type="evidence at protein level"/>
<sequence>MADQRSKTNRWNWEVSGFEPRKSSSNASFAESTGHRTTGPLLRRNSISTPSLPPKQAIASKVNGLKEKVKLAKEDYLELRQEATDLQEYSNAKLDRVTRYLGVLAEKSRKLDQFVLETEARISPLINEKKRLFNDLLTAKGNIKVFCRARPLFEDEGPSVIEFPGDCTICVNTSDDTLSNPKKDFEFDRVYGPHVGQAALFSDVQPFVQSALDGSNVSILSYGQTNAGKTYTMEGSNHDRGLYARCFEELFDLANSDSTSTSRFSFSLSVFEIYNEQIRDLLSETQSNLPNINMDLHESVIELGQEKVDNPLEFLGVLKSAFLNRGNYKSKFNVTHLIVSIHIYYSNTITGENIYSKLSLVDLAGSEGLIMENDSGDHVTDLLHVMNSISALGDVLSSLTSGKDSIPYDNSILTRVLADSLGGSSKTLMIVNICPSVQTLSETISCLNYAARARNTVPSLGNRDTIKKWRDVASDARKELLEKERENQNLKQEVVGLKKALKDANDQCVLLYSEVQRAWKVSFTLQSDLKSENIMLVDKHRLEKEQNSQLRNQIAQFLQLDQEQKLQMQQQDSAIQNLQAKITDLESQVSEAVRSDTTRTGDALQSQDIFSPIPKAVEGTTDSSSVTKKLEEELKKRDALIERLHEENEKLFDRLTERSMAVSTQVLSPSLRASPNIQPANVNRGEGYSAEAVALPSTPNKNNGAITLVKSGTDLVKTTPAGEYLTAALNDFDPEEYEGLAAIADGANKLLMLVLAAVIKAGASREHEILAEIRDSVFSFIRKMEPRRVMDTMLVSRVRILYIRSLLARSPELQTIRVSPVECFLEKPNTGRSKSTSRGSSPGRSPVRYLDTQIHGFKVNIKAERRNKLASVVSRMRGLEQDAGRQQVTGVKLREMQDEAKSFAIGNKALAALFVHTPAGELQRQIRLWLAENFEFLSVTSDDVSGGNGGQLELLSTAIMDGWMAGLGAAVPPHTDALGQLLSEYAKRVYTSQMQHMKDIAGTLAAEEAEDAGQVSKLRSALESVDHKRRKILQQMKSDAALLNLEEGSSPIPNPSTAAEDSRLASLISLDGILKQVKEITRQASVHVLSKSKKKALLESLDELTERMPSLLDIDHPCAQREIATAHQLVETIPEQEDTNILEQSHDRRPSLESISSGETDVSQWNVLQFNTGSSAPFIIKCGGNNNSELVIKADARVQEPKGGEIVRVVPRPSVLVNMSLEEMKQMFVQLPEALSLLALARTADGTRARYSRLYKTLAMKVPSLKDLVSELE</sequence>
<keyword id="KW-0025">Alternative splicing</keyword>
<keyword id="KW-0067">ATP-binding</keyword>
<keyword id="KW-1003">Cell membrane</keyword>
<keyword id="KW-0158">Chromosome</keyword>
<keyword id="KW-0175">Coiled coil</keyword>
<keyword id="KW-0963">Cytoplasm</keyword>
<keyword id="KW-0206">Cytoskeleton</keyword>
<keyword id="KW-0945">Host-virus interaction</keyword>
<keyword id="KW-0472">Membrane</keyword>
<keyword id="KW-0493">Microtubule</keyword>
<keyword id="KW-0505">Motor protein</keyword>
<keyword id="KW-0547">Nucleotide-binding</keyword>
<keyword id="KW-0539">Nucleus</keyword>
<keyword id="KW-0597">Phosphoprotein</keyword>
<keyword id="KW-1185">Reference proteome</keyword>
<name>KN14A_ARATH</name>
<evidence type="ECO:0000255" key="1"/>
<evidence type="ECO:0000255" key="2">
    <source>
        <dbReference type="PROSITE-ProRule" id="PRU00283"/>
    </source>
</evidence>
<evidence type="ECO:0000256" key="3">
    <source>
        <dbReference type="SAM" id="MobiDB-lite"/>
    </source>
</evidence>
<evidence type="ECO:0000269" key="4">
    <source>
    </source>
</evidence>
<evidence type="ECO:0000269" key="5">
    <source>
    </source>
</evidence>
<evidence type="ECO:0000269" key="6">
    <source>
    </source>
</evidence>
<evidence type="ECO:0000269" key="7">
    <source>
    </source>
</evidence>
<evidence type="ECO:0000269" key="8">
    <source>
    </source>
</evidence>
<evidence type="ECO:0000269" key="9">
    <source>
    </source>
</evidence>
<evidence type="ECO:0000269" key="10">
    <source ref="5"/>
</evidence>
<evidence type="ECO:0000303" key="11">
    <source>
    </source>
</evidence>
<evidence type="ECO:0000303" key="12">
    <source>
    </source>
</evidence>
<evidence type="ECO:0000303" key="13">
    <source>
    </source>
</evidence>
<evidence type="ECO:0000303" key="14">
    <source>
    </source>
</evidence>
<evidence type="ECO:0000303" key="15">
    <source>
    </source>
</evidence>
<evidence type="ECO:0000303" key="16">
    <source ref="5"/>
</evidence>
<evidence type="ECO:0000305" key="17"/>
<evidence type="ECO:0000312" key="18">
    <source>
        <dbReference type="Araport" id="AT5G10470"/>
    </source>
</evidence>
<evidence type="ECO:0000312" key="19">
    <source>
        <dbReference type="EMBL" id="AAM49809.1"/>
    </source>
</evidence>
<evidence type="ECO:0000312" key="20">
    <source>
        <dbReference type="EMBL" id="CAB89396.1"/>
    </source>
</evidence>
<gene>
    <name evidence="17" type="primary">KIN14A</name>
    <name evidence="19" type="synonym">GRIMP</name>
    <name evidence="15" type="synonym">KAC1</name>
    <name evidence="13" type="synonym">KCA1</name>
    <name evidence="12" type="synonym">KSN1</name>
    <name evidence="16" type="synonym">TH65</name>
    <name evidence="18" type="ordered locus">At5g10470</name>
    <name evidence="20" type="ORF">F12B17.180</name>
</gene>
<accession>Q9LX99</accession>
<accession>B3H459</accession>
<accession>O23652</accession>
<accession>Q0WVP0</accession>
<reference key="1">
    <citation type="journal article" date="2002" name="Plant Cell">
        <title>A geminivirus replication protein interacts with a protein kinase and a motor protein that display different expression patterns during plant development and infection.</title>
        <authorList>
            <person name="Kong L.-J."/>
            <person name="Hanley-Bowdoin L."/>
        </authorList>
    </citation>
    <scope>NUCLEOTIDE SEQUENCE [MRNA]</scope>
    <scope>INTERACTION WITH GEMINIVIRUS AL1</scope>
    <scope>DEVELOPMENTAL STAGE</scope>
    <scope>SUBCELLULAR LOCATION</scope>
    <scope>TISSUE SPECIFICITY</scope>
    <scope>PHOSPHORYLATION</scope>
    <source>
        <strain>cv. Columbia</strain>
    </source>
</reference>
<reference key="2">
    <citation type="journal article" date="2000" name="Nature">
        <title>Sequence and analysis of chromosome 5 of the plant Arabidopsis thaliana.</title>
        <authorList>
            <person name="Tabata S."/>
            <person name="Kaneko T."/>
            <person name="Nakamura Y."/>
            <person name="Kotani H."/>
            <person name="Kato T."/>
            <person name="Asamizu E."/>
            <person name="Miyajima N."/>
            <person name="Sasamoto S."/>
            <person name="Kimura T."/>
            <person name="Hosouchi T."/>
            <person name="Kawashima K."/>
            <person name="Kohara M."/>
            <person name="Matsumoto M."/>
            <person name="Matsuno A."/>
            <person name="Muraki A."/>
            <person name="Nakayama S."/>
            <person name="Nakazaki N."/>
            <person name="Naruo K."/>
            <person name="Okumura S."/>
            <person name="Shinpo S."/>
            <person name="Takeuchi C."/>
            <person name="Wada T."/>
            <person name="Watanabe A."/>
            <person name="Yamada M."/>
            <person name="Yasuda M."/>
            <person name="Sato S."/>
            <person name="de la Bastide M."/>
            <person name="Huang E."/>
            <person name="Spiegel L."/>
            <person name="Gnoj L."/>
            <person name="O'Shaughnessy A."/>
            <person name="Preston R."/>
            <person name="Habermann K."/>
            <person name="Murray J."/>
            <person name="Johnson D."/>
            <person name="Rohlfing T."/>
            <person name="Nelson J."/>
            <person name="Stoneking T."/>
            <person name="Pepin K."/>
            <person name="Spieth J."/>
            <person name="Sekhon M."/>
            <person name="Armstrong J."/>
            <person name="Becker M."/>
            <person name="Belter E."/>
            <person name="Cordum H."/>
            <person name="Cordes M."/>
            <person name="Courtney L."/>
            <person name="Courtney W."/>
            <person name="Dante M."/>
            <person name="Du H."/>
            <person name="Edwards J."/>
            <person name="Fryman J."/>
            <person name="Haakensen B."/>
            <person name="Lamar E."/>
            <person name="Latreille P."/>
            <person name="Leonard S."/>
            <person name="Meyer R."/>
            <person name="Mulvaney E."/>
            <person name="Ozersky P."/>
            <person name="Riley A."/>
            <person name="Strowmatt C."/>
            <person name="Wagner-McPherson C."/>
            <person name="Wollam A."/>
            <person name="Yoakum M."/>
            <person name="Bell M."/>
            <person name="Dedhia N."/>
            <person name="Parnell L."/>
            <person name="Shah R."/>
            <person name="Rodriguez M."/>
            <person name="Hoon See L."/>
            <person name="Vil D."/>
            <person name="Baker J."/>
            <person name="Kirchoff K."/>
            <person name="Toth K."/>
            <person name="King L."/>
            <person name="Bahret A."/>
            <person name="Miller B."/>
            <person name="Marra M.A."/>
            <person name="Martienssen R."/>
            <person name="McCombie W.R."/>
            <person name="Wilson R.K."/>
            <person name="Murphy G."/>
            <person name="Bancroft I."/>
            <person name="Volckaert G."/>
            <person name="Wambutt R."/>
            <person name="Duesterhoeft A."/>
            <person name="Stiekema W."/>
            <person name="Pohl T."/>
            <person name="Entian K.-D."/>
            <person name="Terryn N."/>
            <person name="Hartley N."/>
            <person name="Bent E."/>
            <person name="Johnson S."/>
            <person name="Langham S.-A."/>
            <person name="McCullagh B."/>
            <person name="Robben J."/>
            <person name="Grymonprez B."/>
            <person name="Zimmermann W."/>
            <person name="Ramsperger U."/>
            <person name="Wedler H."/>
            <person name="Balke K."/>
            <person name="Wedler E."/>
            <person name="Peters S."/>
            <person name="van Staveren M."/>
            <person name="Dirkse W."/>
            <person name="Mooijman P."/>
            <person name="Klein Lankhorst R."/>
            <person name="Weitzenegger T."/>
            <person name="Bothe G."/>
            <person name="Rose M."/>
            <person name="Hauf J."/>
            <person name="Berneiser S."/>
            <person name="Hempel S."/>
            <person name="Feldpausch M."/>
            <person name="Lamberth S."/>
            <person name="Villarroel R."/>
            <person name="Gielen J."/>
            <person name="Ardiles W."/>
            <person name="Bents O."/>
            <person name="Lemcke K."/>
            <person name="Kolesov G."/>
            <person name="Mayer K.F.X."/>
            <person name="Rudd S."/>
            <person name="Schoof H."/>
            <person name="Schueller C."/>
            <person name="Zaccaria P."/>
            <person name="Mewes H.-W."/>
            <person name="Bevan M."/>
            <person name="Fransz P.F."/>
        </authorList>
    </citation>
    <scope>NUCLEOTIDE SEQUENCE [LARGE SCALE GENOMIC DNA]</scope>
    <source>
        <strain>cv. Columbia</strain>
    </source>
</reference>
<reference key="3">
    <citation type="journal article" date="2017" name="Plant J.">
        <title>Araport11: a complete reannotation of the Arabidopsis thaliana reference genome.</title>
        <authorList>
            <person name="Cheng C.Y."/>
            <person name="Krishnakumar V."/>
            <person name="Chan A.P."/>
            <person name="Thibaud-Nissen F."/>
            <person name="Schobel S."/>
            <person name="Town C.D."/>
        </authorList>
    </citation>
    <scope>GENOME REANNOTATION</scope>
    <source>
        <strain>cv. Columbia</strain>
    </source>
</reference>
<reference key="4">
    <citation type="submission" date="2006-07" db="EMBL/GenBank/DDBJ databases">
        <title>Large-scale analysis of RIKEN Arabidopsis full-length (RAFL) cDNAs.</title>
        <authorList>
            <person name="Totoki Y."/>
            <person name="Seki M."/>
            <person name="Ishida J."/>
            <person name="Nakajima M."/>
            <person name="Enju A."/>
            <person name="Kamiya A."/>
            <person name="Narusaka M."/>
            <person name="Shin-i T."/>
            <person name="Nakagawa M."/>
            <person name="Sakamoto N."/>
            <person name="Oishi K."/>
            <person name="Kohara Y."/>
            <person name="Kobayashi M."/>
            <person name="Toyoda A."/>
            <person name="Sakaki Y."/>
            <person name="Sakurai T."/>
            <person name="Iida K."/>
            <person name="Akiyama K."/>
            <person name="Satou M."/>
            <person name="Toyoda T."/>
            <person name="Konagaya A."/>
            <person name="Carninci P."/>
            <person name="Kawai J."/>
            <person name="Hayashizaki Y."/>
            <person name="Shinozaki K."/>
        </authorList>
    </citation>
    <scope>NUCLEOTIDE SEQUENCE [LARGE SCALE MRNA]</scope>
    <source>
        <strain>cv. Columbia</strain>
    </source>
</reference>
<reference key="5">
    <citation type="journal article" date="1997" name="J. Exp. Bot.">
        <title>Identification of proteins interacting with the Arabidopsis Cdc2aAt protein.</title>
        <authorList>
            <person name="de Veylder L."/>
            <person name="Segers G."/>
            <person name="Glab N."/>
            <person name="van Montagu M."/>
            <person name="Inze D."/>
        </authorList>
    </citation>
    <scope>NUCLEOTIDE SEQUENCE [MRNA] OF 473-866</scope>
    <scope>INTERACTION WITH CDKA-1</scope>
</reference>
<reference key="6">
    <citation type="journal article" date="2001" name="BMC Genomics">
        <title>Kinesins in the Arabidopsis genome: a comparative analysis among eukaryotes.</title>
        <authorList>
            <person name="Reddy A.S."/>
            <person name="Day I.S."/>
        </authorList>
    </citation>
    <scope>GENE FAMILY</scope>
</reference>
<reference key="7">
    <citation type="journal article" date="2003" name="J. Cell Sci.">
        <title>The Arabidopsis lue1 mutant defines a katanin p60 ortholog involved in hormonal control of microtubule orientation during cell growth.</title>
        <authorList>
            <person name="Bouquin T."/>
            <person name="Mattsson O."/>
            <person name="Naested H."/>
            <person name="Foster R."/>
            <person name="Mundy J."/>
        </authorList>
    </citation>
    <scope>INTERACTION WITH LUE1/KSS</scope>
</reference>
<reference key="8">
    <citation type="journal article" date="2004" name="Plant Physiol.">
        <title>A plant-specific subclass of C-terminal kinesins contains a conserved a-type cyclin-dependent kinase site implicated in folding and dimerization.</title>
        <authorList>
            <person name="Vanstraelen M."/>
            <person name="Torres Acosta J.A."/>
            <person name="De Veylder L."/>
            <person name="Inze D."/>
            <person name="Geelen D."/>
        </authorList>
    </citation>
    <scope>FUNCTION</scope>
    <scope>SUBUNIT</scope>
    <scope>INTERACTION WITH CDKA-1</scope>
    <scope>SUBCELLULAR LOCATION</scope>
</reference>
<reference key="9">
    <citation type="journal article" date="2006" name="BMC Genomics">
        <title>Comprehensive comparative analysis of kinesins in photosynthetic eukaryotes.</title>
        <authorList>
            <person name="Richardson D.N."/>
            <person name="Simmons M.P."/>
            <person name="Reddy A.S."/>
        </authorList>
    </citation>
    <scope>GENE FAMILY</scope>
    <scope>NOMENCLATURE</scope>
</reference>
<reference key="10">
    <citation type="journal article" date="2006" name="Curr. Biol.">
        <title>Cell cycle-dependent targeting of a kinesin at the plasma membrane demarcates the division site in plant cells.</title>
        <authorList>
            <person name="Vanstraelen M."/>
            <person name="Van Damme D."/>
            <person name="De Rycke R."/>
            <person name="Mylle E."/>
            <person name="Inze D."/>
            <person name="Geelen D."/>
        </authorList>
    </citation>
    <scope>FUNCTION</scope>
    <scope>SUBCELLULAR LOCATION</scope>
    <scope>MUTAGENESIS OF SER-841 AND SER-845</scope>
</reference>
<reference key="11">
    <citation type="journal article" date="2009" name="Plant Physiol.">
        <title>Large-scale Arabidopsis phosphoproteome profiling reveals novel chloroplast kinase substrates and phosphorylation networks.</title>
        <authorList>
            <person name="Reiland S."/>
            <person name="Messerli G."/>
            <person name="Baerenfaller K."/>
            <person name="Gerrits B."/>
            <person name="Endler A."/>
            <person name="Grossmann J."/>
            <person name="Gruissem W."/>
            <person name="Baginsky S."/>
        </authorList>
    </citation>
    <scope>IDENTIFICATION BY MASS SPECTROMETRY [LARGE SCALE ANALYSIS]</scope>
</reference>
<reference key="12">
    <citation type="journal article" date="2010" name="Proc. Natl. Acad. Sci. U.S.A.">
        <title>Two kinesin-like proteins mediate actin-based chloroplast movement in Arabidopsis thaliana.</title>
        <authorList>
            <person name="Suetsugu N."/>
            <person name="Yamada N."/>
            <person name="Kagawa T."/>
            <person name="Yonekura H."/>
            <person name="Uyeda T.Q."/>
            <person name="Kadota A."/>
            <person name="Wada M."/>
        </authorList>
    </citation>
    <scope>FUNCTION</scope>
    <scope>SUBCELLULAR LOCATION</scope>
    <scope>DISRUPTION PHENOTYPE</scope>
    <scope>MUTAGENESIS OF ASN-134 AND LYS-426</scope>
</reference>
<reference key="13">
    <citation type="journal article" date="2012" name="Protoplasma">
        <title>Functions of the Arabidopsis kinesin superfamily of microtubule-based motor proteins.</title>
        <authorList>
            <person name="Zhu C."/>
            <person name="Dixit R."/>
        </authorList>
    </citation>
    <scope>REVIEW</scope>
</reference>
<reference key="14">
    <citation type="journal article" date="2016" name="PLoS ONE">
        <title>Light-induced movements of chloroplasts and nuclei are regulated in both cp-actin-filament-dependent and -independent manners in Arabidopsis thaliana.</title>
        <authorList>
            <person name="Suetsugu N."/>
            <person name="Higa T."/>
            <person name="Gotoh E."/>
            <person name="Wada M."/>
        </authorList>
    </citation>
    <scope>FUNCTION</scope>
    <scope>DISRUPTION PHENOTYPE</scope>
</reference>